<organism>
    <name type="scientific">Synaptomys borealis</name>
    <name type="common">Northern bog lemming</name>
    <name type="synonym">Mictomys borealis</name>
    <dbReference type="NCBI Taxonomy" id="98318"/>
    <lineage>
        <taxon>Eukaryota</taxon>
        <taxon>Metazoa</taxon>
        <taxon>Chordata</taxon>
        <taxon>Craniata</taxon>
        <taxon>Vertebrata</taxon>
        <taxon>Euteleostomi</taxon>
        <taxon>Mammalia</taxon>
        <taxon>Eutheria</taxon>
        <taxon>Euarchontoglires</taxon>
        <taxon>Glires</taxon>
        <taxon>Rodentia</taxon>
        <taxon>Myomorpha</taxon>
        <taxon>Muroidea</taxon>
        <taxon>Cricetidae</taxon>
        <taxon>Arvicolinae</taxon>
        <taxon>Synaptomys</taxon>
    </lineage>
</organism>
<geneLocation type="mitochondrion"/>
<dbReference type="EMBL" id="AF119259">
    <property type="protein sequence ID" value="AAD43877.1"/>
    <property type="molecule type" value="Genomic_DNA"/>
</dbReference>
<dbReference type="SMR" id="Q9XNN4"/>
<dbReference type="GO" id="GO:0005743">
    <property type="term" value="C:mitochondrial inner membrane"/>
    <property type="evidence" value="ECO:0007669"/>
    <property type="project" value="UniProtKB-SubCell"/>
</dbReference>
<dbReference type="GO" id="GO:0045275">
    <property type="term" value="C:respiratory chain complex III"/>
    <property type="evidence" value="ECO:0007669"/>
    <property type="project" value="InterPro"/>
</dbReference>
<dbReference type="GO" id="GO:0046872">
    <property type="term" value="F:metal ion binding"/>
    <property type="evidence" value="ECO:0007669"/>
    <property type="project" value="UniProtKB-KW"/>
</dbReference>
<dbReference type="GO" id="GO:0008121">
    <property type="term" value="F:ubiquinol-cytochrome-c reductase activity"/>
    <property type="evidence" value="ECO:0007669"/>
    <property type="project" value="InterPro"/>
</dbReference>
<dbReference type="GO" id="GO:0006122">
    <property type="term" value="P:mitochondrial electron transport, ubiquinol to cytochrome c"/>
    <property type="evidence" value="ECO:0007669"/>
    <property type="project" value="TreeGrafter"/>
</dbReference>
<dbReference type="CDD" id="cd00290">
    <property type="entry name" value="cytochrome_b_C"/>
    <property type="match status" value="1"/>
</dbReference>
<dbReference type="CDD" id="cd00284">
    <property type="entry name" value="Cytochrome_b_N"/>
    <property type="match status" value="1"/>
</dbReference>
<dbReference type="FunFam" id="1.20.810.10:FF:000002">
    <property type="entry name" value="Cytochrome b"/>
    <property type="match status" value="1"/>
</dbReference>
<dbReference type="Gene3D" id="1.20.810.10">
    <property type="entry name" value="Cytochrome Bc1 Complex, Chain C"/>
    <property type="match status" value="1"/>
</dbReference>
<dbReference type="InterPro" id="IPR005798">
    <property type="entry name" value="Cyt_b/b6_C"/>
</dbReference>
<dbReference type="InterPro" id="IPR036150">
    <property type="entry name" value="Cyt_b/b6_C_sf"/>
</dbReference>
<dbReference type="InterPro" id="IPR005797">
    <property type="entry name" value="Cyt_b/b6_N"/>
</dbReference>
<dbReference type="InterPro" id="IPR027387">
    <property type="entry name" value="Cytb/b6-like_sf"/>
</dbReference>
<dbReference type="InterPro" id="IPR030689">
    <property type="entry name" value="Cytochrome_b"/>
</dbReference>
<dbReference type="InterPro" id="IPR048260">
    <property type="entry name" value="Cytochrome_b_C_euk/bac"/>
</dbReference>
<dbReference type="InterPro" id="IPR048259">
    <property type="entry name" value="Cytochrome_b_N_euk/bac"/>
</dbReference>
<dbReference type="InterPro" id="IPR016174">
    <property type="entry name" value="Di-haem_cyt_TM"/>
</dbReference>
<dbReference type="PANTHER" id="PTHR19271">
    <property type="entry name" value="CYTOCHROME B"/>
    <property type="match status" value="1"/>
</dbReference>
<dbReference type="PANTHER" id="PTHR19271:SF16">
    <property type="entry name" value="CYTOCHROME B"/>
    <property type="match status" value="1"/>
</dbReference>
<dbReference type="Pfam" id="PF00032">
    <property type="entry name" value="Cytochrom_B_C"/>
    <property type="match status" value="1"/>
</dbReference>
<dbReference type="Pfam" id="PF00033">
    <property type="entry name" value="Cytochrome_B"/>
    <property type="match status" value="1"/>
</dbReference>
<dbReference type="PIRSF" id="PIRSF038885">
    <property type="entry name" value="COB"/>
    <property type="match status" value="1"/>
</dbReference>
<dbReference type="SUPFAM" id="SSF81648">
    <property type="entry name" value="a domain/subunit of cytochrome bc1 complex (Ubiquinol-cytochrome c reductase)"/>
    <property type="match status" value="1"/>
</dbReference>
<dbReference type="SUPFAM" id="SSF81342">
    <property type="entry name" value="Transmembrane di-heme cytochromes"/>
    <property type="match status" value="1"/>
</dbReference>
<dbReference type="PROSITE" id="PS51003">
    <property type="entry name" value="CYTB_CTER"/>
    <property type="match status" value="1"/>
</dbReference>
<dbReference type="PROSITE" id="PS51002">
    <property type="entry name" value="CYTB_NTER"/>
    <property type="match status" value="1"/>
</dbReference>
<evidence type="ECO:0000250" key="1"/>
<evidence type="ECO:0000250" key="2">
    <source>
        <dbReference type="UniProtKB" id="P00157"/>
    </source>
</evidence>
<evidence type="ECO:0000255" key="3">
    <source>
        <dbReference type="PROSITE-ProRule" id="PRU00967"/>
    </source>
</evidence>
<evidence type="ECO:0000255" key="4">
    <source>
        <dbReference type="PROSITE-ProRule" id="PRU00968"/>
    </source>
</evidence>
<protein>
    <recommendedName>
        <fullName>Cytochrome b</fullName>
    </recommendedName>
    <alternativeName>
        <fullName>Complex III subunit 3</fullName>
    </alternativeName>
    <alternativeName>
        <fullName>Complex III subunit III</fullName>
    </alternativeName>
    <alternativeName>
        <fullName>Cytochrome b-c1 complex subunit 3</fullName>
    </alternativeName>
    <alternativeName>
        <fullName>Ubiquinol-cytochrome-c reductase complex cytochrome b subunit</fullName>
    </alternativeName>
</protein>
<sequence>MTIIRKKHPLIKLINHSFIDLPTPSNISSWWNFGSLLGLCLMIQILTGLFLAMHYTSDTTTAFSSVAHICRDVNYGWLIRYMHANGASMFFICLFLHVGRGVYYGSYNMIETWNMGIVLLFAVMATAFMGYVLPWGQMSFWGATVITNLLSAIPYIGTTLVEWIWGGFSVDKATLTRFFAFHFILPFIITALVLVHLLFLHETGSNNPSGLNSDADKIPFHPYYTIKDLLGALLLLTALMILVLFFPDILGDPDNYTPANPLNTPPHIKPEWYFLFAYAILRSIPNKLGGVLALILSILILAFMPLLHTSKQRGITFRPITQTMYWILVSDLLILTWIGGQPVEYPFIMIGQVASITYFAIIVIFMPIAGIIENNILGLD</sequence>
<accession>Q9XNN4</accession>
<gene>
    <name type="primary">MT-CYB</name>
    <name type="synonym">COB</name>
    <name type="synonym">CYTB</name>
    <name type="synonym">MTCYB</name>
</gene>
<reference key="1">
    <citation type="journal article" date="1999" name="J. Mammal. Evol.">
        <title>MtDNA evidence for repeated pulses of speciation within arvicoline and murid rodents.</title>
        <authorList>
            <person name="Conroy C.J."/>
            <person name="Cook J.A."/>
        </authorList>
    </citation>
    <scope>NUCLEOTIDE SEQUENCE [GENOMIC DNA]</scope>
</reference>
<name>CYB_SYNBO</name>
<feature type="chain" id="PRO_0000257943" description="Cytochrome b">
    <location>
        <begin position="1"/>
        <end position="380"/>
    </location>
</feature>
<feature type="transmembrane region" description="Helical" evidence="2">
    <location>
        <begin position="33"/>
        <end position="53"/>
    </location>
</feature>
<feature type="transmembrane region" description="Helical" evidence="2">
    <location>
        <begin position="77"/>
        <end position="98"/>
    </location>
</feature>
<feature type="transmembrane region" description="Helical" evidence="2">
    <location>
        <begin position="113"/>
        <end position="133"/>
    </location>
</feature>
<feature type="transmembrane region" description="Helical" evidence="2">
    <location>
        <begin position="178"/>
        <end position="198"/>
    </location>
</feature>
<feature type="transmembrane region" description="Helical" evidence="2">
    <location>
        <begin position="226"/>
        <end position="246"/>
    </location>
</feature>
<feature type="transmembrane region" description="Helical" evidence="2">
    <location>
        <begin position="288"/>
        <end position="308"/>
    </location>
</feature>
<feature type="transmembrane region" description="Helical" evidence="2">
    <location>
        <begin position="320"/>
        <end position="340"/>
    </location>
</feature>
<feature type="transmembrane region" description="Helical" evidence="2">
    <location>
        <begin position="347"/>
        <end position="367"/>
    </location>
</feature>
<feature type="binding site" description="axial binding residue" evidence="2">
    <location>
        <position position="83"/>
    </location>
    <ligand>
        <name>heme b</name>
        <dbReference type="ChEBI" id="CHEBI:60344"/>
        <label>b562</label>
    </ligand>
    <ligandPart>
        <name>Fe</name>
        <dbReference type="ChEBI" id="CHEBI:18248"/>
    </ligandPart>
</feature>
<feature type="binding site" description="axial binding residue" evidence="2">
    <location>
        <position position="97"/>
    </location>
    <ligand>
        <name>heme b</name>
        <dbReference type="ChEBI" id="CHEBI:60344"/>
        <label>b566</label>
    </ligand>
    <ligandPart>
        <name>Fe</name>
        <dbReference type="ChEBI" id="CHEBI:18248"/>
    </ligandPart>
</feature>
<feature type="binding site" description="axial binding residue" evidence="2">
    <location>
        <position position="182"/>
    </location>
    <ligand>
        <name>heme b</name>
        <dbReference type="ChEBI" id="CHEBI:60344"/>
        <label>b562</label>
    </ligand>
    <ligandPart>
        <name>Fe</name>
        <dbReference type="ChEBI" id="CHEBI:18248"/>
    </ligandPart>
</feature>
<feature type="binding site" description="axial binding residue" evidence="2">
    <location>
        <position position="196"/>
    </location>
    <ligand>
        <name>heme b</name>
        <dbReference type="ChEBI" id="CHEBI:60344"/>
        <label>b566</label>
    </ligand>
    <ligandPart>
        <name>Fe</name>
        <dbReference type="ChEBI" id="CHEBI:18248"/>
    </ligandPart>
</feature>
<feature type="binding site" evidence="2">
    <location>
        <position position="201"/>
    </location>
    <ligand>
        <name>a ubiquinone</name>
        <dbReference type="ChEBI" id="CHEBI:16389"/>
    </ligand>
</feature>
<keyword id="KW-0249">Electron transport</keyword>
<keyword id="KW-0349">Heme</keyword>
<keyword id="KW-0408">Iron</keyword>
<keyword id="KW-0472">Membrane</keyword>
<keyword id="KW-0479">Metal-binding</keyword>
<keyword id="KW-0496">Mitochondrion</keyword>
<keyword id="KW-0999">Mitochondrion inner membrane</keyword>
<keyword id="KW-0679">Respiratory chain</keyword>
<keyword id="KW-0812">Transmembrane</keyword>
<keyword id="KW-1133">Transmembrane helix</keyword>
<keyword id="KW-0813">Transport</keyword>
<keyword id="KW-0830">Ubiquinone</keyword>
<proteinExistence type="inferred from homology"/>
<comment type="function">
    <text evidence="2">Component of the ubiquinol-cytochrome c reductase complex (complex III or cytochrome b-c1 complex) that is part of the mitochondrial respiratory chain. The b-c1 complex mediates electron transfer from ubiquinol to cytochrome c. Contributes to the generation of a proton gradient across the mitochondrial membrane that is then used for ATP synthesis.</text>
</comment>
<comment type="cofactor">
    <cofactor evidence="2">
        <name>heme b</name>
        <dbReference type="ChEBI" id="CHEBI:60344"/>
    </cofactor>
    <text evidence="2">Binds 2 heme b groups non-covalently.</text>
</comment>
<comment type="subunit">
    <text evidence="2">The cytochrome bc1 complex contains 11 subunits: 3 respiratory subunits (MT-CYB, CYC1 and UQCRFS1), 2 core proteins (UQCRC1 and UQCRC2) and 6 low-molecular weight proteins (UQCRH/QCR6, UQCRB/QCR7, UQCRQ/QCR8, UQCR10/QCR9, UQCR11/QCR10 and a cleavage product of UQCRFS1). This cytochrome bc1 complex then forms a dimer.</text>
</comment>
<comment type="subcellular location">
    <subcellularLocation>
        <location evidence="2">Mitochondrion inner membrane</location>
        <topology evidence="2">Multi-pass membrane protein</topology>
    </subcellularLocation>
</comment>
<comment type="miscellaneous">
    <text evidence="1">Heme 1 (or BL or b562) is low-potential and absorbs at about 562 nm, and heme 2 (or BH or b566) is high-potential and absorbs at about 566 nm.</text>
</comment>
<comment type="similarity">
    <text evidence="3 4">Belongs to the cytochrome b family.</text>
</comment>
<comment type="caution">
    <text evidence="2">The full-length protein contains only eight transmembrane helices, not nine as predicted by bioinformatics tools.</text>
</comment>